<name>RL20_DESAH</name>
<proteinExistence type="inferred from homology"/>
<keyword id="KW-1185">Reference proteome</keyword>
<keyword id="KW-0687">Ribonucleoprotein</keyword>
<keyword id="KW-0689">Ribosomal protein</keyword>
<keyword id="KW-0694">RNA-binding</keyword>
<keyword id="KW-0699">rRNA-binding</keyword>
<evidence type="ECO:0000255" key="1">
    <source>
        <dbReference type="HAMAP-Rule" id="MF_00382"/>
    </source>
</evidence>
<evidence type="ECO:0000305" key="2"/>
<accession>C0QHL7</accession>
<dbReference type="EMBL" id="CP001087">
    <property type="protein sequence ID" value="ACN13575.1"/>
    <property type="molecule type" value="Genomic_DNA"/>
</dbReference>
<dbReference type="RefSeq" id="WP_012662824.1">
    <property type="nucleotide sequence ID" value="NC_012108.1"/>
</dbReference>
<dbReference type="SMR" id="C0QHL7"/>
<dbReference type="STRING" id="177437.HRM2_04600"/>
<dbReference type="KEGG" id="dat:HRM2_04600"/>
<dbReference type="eggNOG" id="COG0292">
    <property type="taxonomic scope" value="Bacteria"/>
</dbReference>
<dbReference type="HOGENOM" id="CLU_123265_0_1_7"/>
<dbReference type="OrthoDB" id="9808966at2"/>
<dbReference type="Proteomes" id="UP000000442">
    <property type="component" value="Chromosome"/>
</dbReference>
<dbReference type="GO" id="GO:1990904">
    <property type="term" value="C:ribonucleoprotein complex"/>
    <property type="evidence" value="ECO:0007669"/>
    <property type="project" value="UniProtKB-KW"/>
</dbReference>
<dbReference type="GO" id="GO:0005840">
    <property type="term" value="C:ribosome"/>
    <property type="evidence" value="ECO:0007669"/>
    <property type="project" value="UniProtKB-KW"/>
</dbReference>
<dbReference type="GO" id="GO:0019843">
    <property type="term" value="F:rRNA binding"/>
    <property type="evidence" value="ECO:0007669"/>
    <property type="project" value="UniProtKB-UniRule"/>
</dbReference>
<dbReference type="GO" id="GO:0003735">
    <property type="term" value="F:structural constituent of ribosome"/>
    <property type="evidence" value="ECO:0007669"/>
    <property type="project" value="InterPro"/>
</dbReference>
<dbReference type="GO" id="GO:0000027">
    <property type="term" value="P:ribosomal large subunit assembly"/>
    <property type="evidence" value="ECO:0007669"/>
    <property type="project" value="UniProtKB-UniRule"/>
</dbReference>
<dbReference type="GO" id="GO:0006412">
    <property type="term" value="P:translation"/>
    <property type="evidence" value="ECO:0007669"/>
    <property type="project" value="InterPro"/>
</dbReference>
<dbReference type="CDD" id="cd07026">
    <property type="entry name" value="Ribosomal_L20"/>
    <property type="match status" value="1"/>
</dbReference>
<dbReference type="FunFam" id="1.10.1900.20:FF:000001">
    <property type="entry name" value="50S ribosomal protein L20"/>
    <property type="match status" value="1"/>
</dbReference>
<dbReference type="Gene3D" id="6.10.160.10">
    <property type="match status" value="1"/>
</dbReference>
<dbReference type="Gene3D" id="1.10.1900.20">
    <property type="entry name" value="Ribosomal protein L20"/>
    <property type="match status" value="1"/>
</dbReference>
<dbReference type="HAMAP" id="MF_00382">
    <property type="entry name" value="Ribosomal_bL20"/>
    <property type="match status" value="1"/>
</dbReference>
<dbReference type="InterPro" id="IPR005813">
    <property type="entry name" value="Ribosomal_bL20"/>
</dbReference>
<dbReference type="InterPro" id="IPR049946">
    <property type="entry name" value="RIBOSOMAL_L20_CS"/>
</dbReference>
<dbReference type="InterPro" id="IPR035566">
    <property type="entry name" value="Ribosomal_protein_bL20_C"/>
</dbReference>
<dbReference type="NCBIfam" id="TIGR01032">
    <property type="entry name" value="rplT_bact"/>
    <property type="match status" value="1"/>
</dbReference>
<dbReference type="PANTHER" id="PTHR10986">
    <property type="entry name" value="39S RIBOSOMAL PROTEIN L20"/>
    <property type="match status" value="1"/>
</dbReference>
<dbReference type="Pfam" id="PF00453">
    <property type="entry name" value="Ribosomal_L20"/>
    <property type="match status" value="1"/>
</dbReference>
<dbReference type="PRINTS" id="PR00062">
    <property type="entry name" value="RIBOSOMALL20"/>
</dbReference>
<dbReference type="SUPFAM" id="SSF74731">
    <property type="entry name" value="Ribosomal protein L20"/>
    <property type="match status" value="1"/>
</dbReference>
<dbReference type="PROSITE" id="PS00937">
    <property type="entry name" value="RIBOSOMAL_L20"/>
    <property type="match status" value="1"/>
</dbReference>
<sequence length="116" mass="13175">MRVKRGFKARRRRNKVLKLAKGFRGSRSKLYRTAADAVDKALGYAYRDRRAKKRDFRKLWIARINAASKMNNISYSKLIHGLKLAKVELDRKVLADLAVSDPAGFSQIALKAAAQL</sequence>
<comment type="function">
    <text evidence="1">Binds directly to 23S ribosomal RNA and is necessary for the in vitro assembly process of the 50S ribosomal subunit. It is not involved in the protein synthesizing functions of that subunit.</text>
</comment>
<comment type="similarity">
    <text evidence="1">Belongs to the bacterial ribosomal protein bL20 family.</text>
</comment>
<feature type="chain" id="PRO_1000205708" description="Large ribosomal subunit protein bL20">
    <location>
        <begin position="1"/>
        <end position="116"/>
    </location>
</feature>
<protein>
    <recommendedName>
        <fullName evidence="1">Large ribosomal subunit protein bL20</fullName>
    </recommendedName>
    <alternativeName>
        <fullName evidence="2">50S ribosomal protein L20</fullName>
    </alternativeName>
</protein>
<organism>
    <name type="scientific">Desulforapulum autotrophicum (strain ATCC 43914 / DSM 3382 / VKM B-1955 / HRM2)</name>
    <name type="common">Desulfobacterium autotrophicum</name>
    <dbReference type="NCBI Taxonomy" id="177437"/>
    <lineage>
        <taxon>Bacteria</taxon>
        <taxon>Pseudomonadati</taxon>
        <taxon>Thermodesulfobacteriota</taxon>
        <taxon>Desulfobacteria</taxon>
        <taxon>Desulfobacterales</taxon>
        <taxon>Desulfobacteraceae</taxon>
        <taxon>Desulforapulum</taxon>
    </lineage>
</organism>
<reference key="1">
    <citation type="journal article" date="2009" name="Environ. Microbiol.">
        <title>Genome sequence of Desulfobacterium autotrophicum HRM2, a marine sulfate reducer oxidizing organic carbon completely to carbon dioxide.</title>
        <authorList>
            <person name="Strittmatter A.W."/>
            <person name="Liesegang H."/>
            <person name="Rabus R."/>
            <person name="Decker I."/>
            <person name="Amann J."/>
            <person name="Andres S."/>
            <person name="Henne A."/>
            <person name="Fricke W.F."/>
            <person name="Martinez-Arias R."/>
            <person name="Bartels D."/>
            <person name="Goesmann A."/>
            <person name="Krause L."/>
            <person name="Puehler A."/>
            <person name="Klenk H.P."/>
            <person name="Richter M."/>
            <person name="Schuler M."/>
            <person name="Gloeckner F.O."/>
            <person name="Meyerdierks A."/>
            <person name="Gottschalk G."/>
            <person name="Amann R."/>
        </authorList>
    </citation>
    <scope>NUCLEOTIDE SEQUENCE [LARGE SCALE GENOMIC DNA]</scope>
    <source>
        <strain>ATCC 43914 / DSM 3382 / VKM B-1955 / HRM2</strain>
    </source>
</reference>
<gene>
    <name evidence="1" type="primary">rplT</name>
    <name type="ordered locus">HRM2_04600</name>
</gene>